<comment type="function">
    <text>Reduces the physiological low-potential two-electron acceptor coenzyme F420, and the artificial one-electron acceptor methylviologen.</text>
</comment>
<comment type="catalytic activity">
    <reaction>
        <text>oxidized coenzyme F420-(gamma-L-Glu)(n) + H2 + H(+) = reduced coenzyme F420-(gamma-L-Glu)(n)</text>
        <dbReference type="Rhea" id="RHEA:23760"/>
        <dbReference type="Rhea" id="RHEA-COMP:12939"/>
        <dbReference type="Rhea" id="RHEA-COMP:14378"/>
        <dbReference type="ChEBI" id="CHEBI:15378"/>
        <dbReference type="ChEBI" id="CHEBI:18276"/>
        <dbReference type="ChEBI" id="CHEBI:133980"/>
        <dbReference type="ChEBI" id="CHEBI:139511"/>
        <dbReference type="EC" id="1.12.98.1"/>
    </reaction>
</comment>
<comment type="cofactor">
    <cofactor>
        <name>Ni(2+)</name>
        <dbReference type="ChEBI" id="CHEBI:49786"/>
    </cofactor>
</comment>
<comment type="cofactor">
    <cofactor>
        <name>iron-sulfur cluster</name>
        <dbReference type="ChEBI" id="CHEBI:30408"/>
    </cofactor>
</comment>
<comment type="cofactor">
    <cofactor>
        <name>FAD</name>
        <dbReference type="ChEBI" id="CHEBI:57692"/>
    </cofactor>
</comment>
<comment type="subunit">
    <text>Pentamer of two alpha chains, two beta chains and a gamma chain.</text>
</comment>
<comment type="similarity">
    <text evidence="1">Belongs to the FrhB family.</text>
</comment>
<name>FRHB_METBF</name>
<proteinExistence type="evidence at protein level"/>
<sequence>MIEDPYLGKYVTCVSARSTDKEILKKAQDGGIATALMVYALEEGFIDGTIVAGEGDKPWQPKPEVAMTREEILKARGTRYSISPQISWLKEATRSFGLDKVGVTGVCCQMQAVRKAQLYPINMRDVPGKVAFTVGLFCMENFPYKSLQSIVEDHANQSLGSVKKMEITKGKFWVYTERGNVATVPLKATHKYEQPGCHVCLDYVSNLADISTGSVGSPDGWSTVFIRTKVGNEIWSKAVADGMFETKPIEEVKPGLDLLRKLAKEKIEKNQKTVEERKTFGVNKGLRNPYA</sequence>
<reference key="1">
    <citation type="journal article" date="1998" name="Arch. Microbiol.">
        <title>Two F420-reducing hydrogenases in Methanosarcina barkeri.</title>
        <authorList>
            <person name="Vaupel M."/>
            <person name="Thauer R.K."/>
        </authorList>
    </citation>
    <scope>NUCLEOTIDE SEQUENCE [GENOMIC DNA]</scope>
</reference>
<reference key="2">
    <citation type="journal article" date="2006" name="J. Bacteriol.">
        <title>The Methanosarcina barkeri genome: comparative analysis with Methanosarcina acetivorans and Methanosarcina mazei reveals extensive rearrangement within methanosarcinal genomes.</title>
        <authorList>
            <person name="Maeder D.L."/>
            <person name="Anderson I."/>
            <person name="Brettin T.S."/>
            <person name="Bruce D.C."/>
            <person name="Gilna P."/>
            <person name="Han C.S."/>
            <person name="Lapidus A."/>
            <person name="Metcalf W.W."/>
            <person name="Saunders E."/>
            <person name="Tapia R."/>
            <person name="Sowers K.R."/>
        </authorList>
    </citation>
    <scope>NUCLEOTIDE SEQUENCE [LARGE SCALE GENOMIC DNA]</scope>
    <source>
        <strain>Fusaro / DSM 804</strain>
    </source>
</reference>
<reference key="3">
    <citation type="journal article" date="1995" name="Eur. J. Biochem.">
        <title>Biochemical characterization of the 8-hydroxy-5-deazaflavin-reactive hydrogenase from Methanosarcina barkeri Fusaro.</title>
        <authorList>
            <person name="Michel R."/>
            <person name="Massanz C."/>
            <person name="Kostka S."/>
            <person name="Richter M."/>
            <person name="Fiebig K."/>
        </authorList>
    </citation>
    <scope>PROTEIN SEQUENCE OF 1-25</scope>
</reference>
<evidence type="ECO:0000305" key="1"/>
<organism>
    <name type="scientific">Methanosarcina barkeri (strain Fusaro / DSM 804)</name>
    <dbReference type="NCBI Taxonomy" id="269797"/>
    <lineage>
        <taxon>Archaea</taxon>
        <taxon>Methanobacteriati</taxon>
        <taxon>Methanobacteriota</taxon>
        <taxon>Stenosarchaea group</taxon>
        <taxon>Methanomicrobia</taxon>
        <taxon>Methanosarcinales</taxon>
        <taxon>Methanosarcinaceae</taxon>
        <taxon>Methanosarcina</taxon>
    </lineage>
</organism>
<protein>
    <recommendedName>
        <fullName>Coenzyme F420 hydrogenase subunit beta</fullName>
        <ecNumber>1.12.98.1</ecNumber>
    </recommendedName>
    <alternativeName>
        <fullName>8-hydroxy-5-deazaflavin-reducing hydrogenase subunit beta</fullName>
        <shortName>FRH</shortName>
    </alternativeName>
</protein>
<accession>P80490</accession>
<accession>O33168</accession>
<accession>Q46FB1</accession>
<keyword id="KW-0903">Direct protein sequencing</keyword>
<keyword id="KW-0408">Iron</keyword>
<keyword id="KW-0411">Iron-sulfur</keyword>
<keyword id="KW-0479">Metal-binding</keyword>
<keyword id="KW-0560">Oxidoreductase</keyword>
<gene>
    <name type="primary">frhB</name>
    <name type="ordered locus">Mbar_A0449</name>
</gene>
<dbReference type="EC" id="1.12.98.1"/>
<dbReference type="EMBL" id="Y13763">
    <property type="protein sequence ID" value="CAA74093.1"/>
    <property type="molecule type" value="Genomic_DNA"/>
</dbReference>
<dbReference type="EMBL" id="CP000099">
    <property type="protein sequence ID" value="AAZ69431.1"/>
    <property type="molecule type" value="Genomic_DNA"/>
</dbReference>
<dbReference type="PIR" id="S63484">
    <property type="entry name" value="S63484"/>
</dbReference>
<dbReference type="SMR" id="P80490"/>
<dbReference type="STRING" id="269797.Mbar_A0449"/>
<dbReference type="PaxDb" id="269797-Mbar_A0449"/>
<dbReference type="GeneID" id="24821965"/>
<dbReference type="KEGG" id="mba:Mbar_A0449"/>
<dbReference type="eggNOG" id="arCOG02651">
    <property type="taxonomic scope" value="Archaea"/>
</dbReference>
<dbReference type="HOGENOM" id="CLU_037958_0_0_2"/>
<dbReference type="OrthoDB" id="37898at2157"/>
<dbReference type="BioCyc" id="MetaCyc:MONOMER-12648"/>
<dbReference type="BRENDA" id="1.12.98.1">
    <property type="organism ID" value="3250"/>
</dbReference>
<dbReference type="GO" id="GO:0050454">
    <property type="term" value="F:coenzyme F420 hydrogenase activity"/>
    <property type="evidence" value="ECO:0007669"/>
    <property type="project" value="UniProtKB-EC"/>
</dbReference>
<dbReference type="GO" id="GO:0050660">
    <property type="term" value="F:flavin adenine dinucleotide binding"/>
    <property type="evidence" value="ECO:0007669"/>
    <property type="project" value="InterPro"/>
</dbReference>
<dbReference type="GO" id="GO:0051536">
    <property type="term" value="F:iron-sulfur cluster binding"/>
    <property type="evidence" value="ECO:0007669"/>
    <property type="project" value="UniProtKB-KW"/>
</dbReference>
<dbReference type="GO" id="GO:0016151">
    <property type="term" value="F:nickel cation binding"/>
    <property type="evidence" value="ECO:0007669"/>
    <property type="project" value="InterPro"/>
</dbReference>
<dbReference type="GO" id="GO:0052592">
    <property type="term" value="F:oxidoreductase activity, acting on CH or CH2 groups, with an iron-sulfur protein as acceptor"/>
    <property type="evidence" value="ECO:0007669"/>
    <property type="project" value="TreeGrafter"/>
</dbReference>
<dbReference type="Gene3D" id="3.10.450.750">
    <property type="match status" value="1"/>
</dbReference>
<dbReference type="InterPro" id="IPR007516">
    <property type="entry name" value="Co_F420_Hydgase/DH_bsu_N"/>
</dbReference>
<dbReference type="InterPro" id="IPR045220">
    <property type="entry name" value="FRHB/FDHB/HCAR-like"/>
</dbReference>
<dbReference type="InterPro" id="IPR017679">
    <property type="entry name" value="FrhB_archaea"/>
</dbReference>
<dbReference type="InterPro" id="IPR007525">
    <property type="entry name" value="FrhB_FdhB_C"/>
</dbReference>
<dbReference type="NCBIfam" id="TIGR03289">
    <property type="entry name" value="frhB"/>
    <property type="match status" value="1"/>
</dbReference>
<dbReference type="NCBIfam" id="NF006807">
    <property type="entry name" value="PRK09325.1"/>
    <property type="match status" value="1"/>
</dbReference>
<dbReference type="PANTHER" id="PTHR31332">
    <property type="entry name" value="7-HYDROXYMETHYL CHLOROPHYLL A REDUCTASE, CHLOROPLASTIC"/>
    <property type="match status" value="1"/>
</dbReference>
<dbReference type="PANTHER" id="PTHR31332:SF6">
    <property type="entry name" value="FORMATE DEHYDROGENASE SUBUNIT BETA"/>
    <property type="match status" value="1"/>
</dbReference>
<dbReference type="Pfam" id="PF04432">
    <property type="entry name" value="FrhB_FdhB_C"/>
    <property type="match status" value="1"/>
</dbReference>
<dbReference type="Pfam" id="PF04422">
    <property type="entry name" value="FrhB_FdhB_N"/>
    <property type="match status" value="1"/>
</dbReference>
<feature type="chain" id="PRO_0000159225" description="Coenzyme F420 hydrogenase subunit beta">
    <location>
        <begin position="1"/>
        <end position="291"/>
    </location>
</feature>